<evidence type="ECO:0000255" key="1"/>
<evidence type="ECO:0000269" key="2">
    <source>
    </source>
</evidence>
<evidence type="ECO:0000305" key="3"/>
<reference key="1">
    <citation type="journal article" date="2002" name="Nature">
        <title>The genome sequence of Schizosaccharomyces pombe.</title>
        <authorList>
            <person name="Wood V."/>
            <person name="Gwilliam R."/>
            <person name="Rajandream M.A."/>
            <person name="Lyne M.H."/>
            <person name="Lyne R."/>
            <person name="Stewart A."/>
            <person name="Sgouros J.G."/>
            <person name="Peat N."/>
            <person name="Hayles J."/>
            <person name="Baker S.G."/>
            <person name="Basham D."/>
            <person name="Bowman S."/>
            <person name="Brooks K."/>
            <person name="Brown D."/>
            <person name="Brown S."/>
            <person name="Chillingworth T."/>
            <person name="Churcher C.M."/>
            <person name="Collins M."/>
            <person name="Connor R."/>
            <person name="Cronin A."/>
            <person name="Davis P."/>
            <person name="Feltwell T."/>
            <person name="Fraser A."/>
            <person name="Gentles S."/>
            <person name="Goble A."/>
            <person name="Hamlin N."/>
            <person name="Harris D.E."/>
            <person name="Hidalgo J."/>
            <person name="Hodgson G."/>
            <person name="Holroyd S."/>
            <person name="Hornsby T."/>
            <person name="Howarth S."/>
            <person name="Huckle E.J."/>
            <person name="Hunt S."/>
            <person name="Jagels K."/>
            <person name="James K.D."/>
            <person name="Jones L."/>
            <person name="Jones M."/>
            <person name="Leather S."/>
            <person name="McDonald S."/>
            <person name="McLean J."/>
            <person name="Mooney P."/>
            <person name="Moule S."/>
            <person name="Mungall K.L."/>
            <person name="Murphy L.D."/>
            <person name="Niblett D."/>
            <person name="Odell C."/>
            <person name="Oliver K."/>
            <person name="O'Neil S."/>
            <person name="Pearson D."/>
            <person name="Quail M.A."/>
            <person name="Rabbinowitsch E."/>
            <person name="Rutherford K.M."/>
            <person name="Rutter S."/>
            <person name="Saunders D."/>
            <person name="Seeger K."/>
            <person name="Sharp S."/>
            <person name="Skelton J."/>
            <person name="Simmonds M.N."/>
            <person name="Squares R."/>
            <person name="Squares S."/>
            <person name="Stevens K."/>
            <person name="Taylor K."/>
            <person name="Taylor R.G."/>
            <person name="Tivey A."/>
            <person name="Walsh S.V."/>
            <person name="Warren T."/>
            <person name="Whitehead S."/>
            <person name="Woodward J.R."/>
            <person name="Volckaert G."/>
            <person name="Aert R."/>
            <person name="Robben J."/>
            <person name="Grymonprez B."/>
            <person name="Weltjens I."/>
            <person name="Vanstreels E."/>
            <person name="Rieger M."/>
            <person name="Schaefer M."/>
            <person name="Mueller-Auer S."/>
            <person name="Gabel C."/>
            <person name="Fuchs M."/>
            <person name="Duesterhoeft A."/>
            <person name="Fritzc C."/>
            <person name="Holzer E."/>
            <person name="Moestl D."/>
            <person name="Hilbert H."/>
            <person name="Borzym K."/>
            <person name="Langer I."/>
            <person name="Beck A."/>
            <person name="Lehrach H."/>
            <person name="Reinhardt R."/>
            <person name="Pohl T.M."/>
            <person name="Eger P."/>
            <person name="Zimmermann W."/>
            <person name="Wedler H."/>
            <person name="Wambutt R."/>
            <person name="Purnelle B."/>
            <person name="Goffeau A."/>
            <person name="Cadieu E."/>
            <person name="Dreano S."/>
            <person name="Gloux S."/>
            <person name="Lelaure V."/>
            <person name="Mottier S."/>
            <person name="Galibert F."/>
            <person name="Aves S.J."/>
            <person name="Xiang Z."/>
            <person name="Hunt C."/>
            <person name="Moore K."/>
            <person name="Hurst S.M."/>
            <person name="Lucas M."/>
            <person name="Rochet M."/>
            <person name="Gaillardin C."/>
            <person name="Tallada V.A."/>
            <person name="Garzon A."/>
            <person name="Thode G."/>
            <person name="Daga R.R."/>
            <person name="Cruzado L."/>
            <person name="Jimenez J."/>
            <person name="Sanchez M."/>
            <person name="del Rey F."/>
            <person name="Benito J."/>
            <person name="Dominguez A."/>
            <person name="Revuelta J.L."/>
            <person name="Moreno S."/>
            <person name="Armstrong J."/>
            <person name="Forsburg S.L."/>
            <person name="Cerutti L."/>
            <person name="Lowe T."/>
            <person name="McCombie W.R."/>
            <person name="Paulsen I."/>
            <person name="Potashkin J."/>
            <person name="Shpakovski G.V."/>
            <person name="Ussery D."/>
            <person name="Barrell B.G."/>
            <person name="Nurse P."/>
        </authorList>
    </citation>
    <scope>NUCLEOTIDE SEQUENCE [LARGE SCALE GENOMIC DNA]</scope>
    <source>
        <strain>972 / ATCC 24843</strain>
    </source>
</reference>
<reference key="2">
    <citation type="journal article" date="2011" name="Science">
        <title>Comparative functional genomics of the fission yeasts.</title>
        <authorList>
            <person name="Rhind N."/>
            <person name="Chen Z."/>
            <person name="Yassour M."/>
            <person name="Thompson D.A."/>
            <person name="Haas B.J."/>
            <person name="Habib N."/>
            <person name="Wapinski I."/>
            <person name="Roy S."/>
            <person name="Lin M.F."/>
            <person name="Heiman D.I."/>
            <person name="Young S.K."/>
            <person name="Furuya K."/>
            <person name="Guo Y."/>
            <person name="Pidoux A."/>
            <person name="Chen H.M."/>
            <person name="Robbertse B."/>
            <person name="Goldberg J.M."/>
            <person name="Aoki K."/>
            <person name="Bayne E.H."/>
            <person name="Berlin A.M."/>
            <person name="Desjardins C.A."/>
            <person name="Dobbs E."/>
            <person name="Dukaj L."/>
            <person name="Fan L."/>
            <person name="FitzGerald M.G."/>
            <person name="French C."/>
            <person name="Gujja S."/>
            <person name="Hansen K."/>
            <person name="Keifenheim D."/>
            <person name="Levin J.Z."/>
            <person name="Mosher R.A."/>
            <person name="Mueller C.A."/>
            <person name="Pfiffner J."/>
            <person name="Priest M."/>
            <person name="Russ C."/>
            <person name="Smialowska A."/>
            <person name="Swoboda P."/>
            <person name="Sykes S.M."/>
            <person name="Vaughn M."/>
            <person name="Vengrova S."/>
            <person name="Yoder R."/>
            <person name="Zeng Q."/>
            <person name="Allshire R."/>
            <person name="Baulcombe D."/>
            <person name="Birren B.W."/>
            <person name="Brown W."/>
            <person name="Ekwall K."/>
            <person name="Kellis M."/>
            <person name="Leatherwood J."/>
            <person name="Levin H."/>
            <person name="Margalit H."/>
            <person name="Martienssen R."/>
            <person name="Nieduszynski C.A."/>
            <person name="Spatafora J.W."/>
            <person name="Friedman N."/>
            <person name="Dalgaard J.Z."/>
            <person name="Baumann P."/>
            <person name="Niki H."/>
            <person name="Regev A."/>
            <person name="Nusbaum C."/>
        </authorList>
    </citation>
    <scope>REVISION OF GENE MODEL</scope>
</reference>
<reference key="3">
    <citation type="journal article" date="2006" name="Nat. Biotechnol.">
        <title>ORFeome cloning and global analysis of protein localization in the fission yeast Schizosaccharomyces pombe.</title>
        <authorList>
            <person name="Matsuyama A."/>
            <person name="Arai R."/>
            <person name="Yashiroda Y."/>
            <person name="Shirai A."/>
            <person name="Kamata A."/>
            <person name="Sekido S."/>
            <person name="Kobayashi Y."/>
            <person name="Hashimoto A."/>
            <person name="Hamamoto M."/>
            <person name="Hiraoka Y."/>
            <person name="Horinouchi S."/>
            <person name="Yoshida M."/>
        </authorList>
    </citation>
    <scope>SUBCELLULAR LOCATION [LARGE SCALE ANALYSIS]</scope>
</reference>
<feature type="chain" id="PRO_0000372629" description="Uncharacterized protein C594.04c">
    <location>
        <begin position="1"/>
        <end position="344"/>
    </location>
</feature>
<feature type="transmembrane region" description="Helical" evidence="1">
    <location>
        <begin position="53"/>
        <end position="73"/>
    </location>
</feature>
<feature type="transmembrane region" description="Helical" evidence="1">
    <location>
        <begin position="84"/>
        <end position="104"/>
    </location>
</feature>
<feature type="transmembrane region" description="Helical" evidence="1">
    <location>
        <begin position="153"/>
        <end position="173"/>
    </location>
</feature>
<feature type="transmembrane region" description="Helical" evidence="1">
    <location>
        <begin position="189"/>
        <end position="209"/>
    </location>
</feature>
<feature type="transmembrane region" description="Helical" evidence="1">
    <location>
        <begin position="275"/>
        <end position="295"/>
    </location>
</feature>
<gene>
    <name type="ORF">SPCC594.04c</name>
</gene>
<organism>
    <name type="scientific">Schizosaccharomyces pombe (strain 972 / ATCC 24843)</name>
    <name type="common">Fission yeast</name>
    <dbReference type="NCBI Taxonomy" id="284812"/>
    <lineage>
        <taxon>Eukaryota</taxon>
        <taxon>Fungi</taxon>
        <taxon>Dikarya</taxon>
        <taxon>Ascomycota</taxon>
        <taxon>Taphrinomycotina</taxon>
        <taxon>Schizosaccharomycetes</taxon>
        <taxon>Schizosaccharomycetales</taxon>
        <taxon>Schizosaccharomycetaceae</taxon>
        <taxon>Schizosaccharomyces</taxon>
    </lineage>
</organism>
<sequence length="344" mass="40518">MTLASTMPIIYSASDAAKWKVAVSPYLYQLSNLKLLFTGKLNFADFYYNTNPFVVGLLLSFILGNVLWGVSVWTKNTSQVDRLWPILPTAFSLHFLFYGLGYNIASRRLMIMAFLQTLWSARLTYNYYRKGGYNRGAEDYRWVRVRQIMPKWIYPLFHYFYIHIFQVLHLYLLASPTYIAMLAGNERAFGAWDWIALELFMFMFVLEMLADQQQWDYYEARNHYNVDKTVPPRFKYDLLSLGRGFNATGLFRWSRHPNFLAEQLIWLSFYLFGAIASESLLNWTIFAWLGLVGVFQGSTRLTEKMSCEKYPLYRVYQDKVGRFFPRLDGSHWDIVDDDASLKED</sequence>
<accession>O74507</accession>
<protein>
    <recommendedName>
        <fullName>Uncharacterized protein C594.04c</fullName>
    </recommendedName>
</protein>
<comment type="subcellular location">
    <subcellularLocation>
        <location evidence="2">Endoplasmic reticulum membrane</location>
        <topology evidence="2">Multi-pass membrane protein</topology>
    </subcellularLocation>
</comment>
<comment type="similarity">
    <text evidence="3">Belongs to the steroid 5-alpha reductase family.</text>
</comment>
<name>YJD4_SCHPO</name>
<keyword id="KW-0256">Endoplasmic reticulum</keyword>
<keyword id="KW-0472">Membrane</keyword>
<keyword id="KW-1185">Reference proteome</keyword>
<keyword id="KW-0812">Transmembrane</keyword>
<keyword id="KW-1133">Transmembrane helix</keyword>
<proteinExistence type="inferred from homology"/>
<dbReference type="EMBL" id="CU329672">
    <property type="protein sequence ID" value="CAA20663.2"/>
    <property type="molecule type" value="Genomic_DNA"/>
</dbReference>
<dbReference type="PIR" id="T41448">
    <property type="entry name" value="T41448"/>
</dbReference>
<dbReference type="RefSeq" id="NP_587790.2">
    <property type="nucleotide sequence ID" value="NM_001022783.2"/>
</dbReference>
<dbReference type="BioGRID" id="276047">
    <property type="interactions" value="40"/>
</dbReference>
<dbReference type="FunCoup" id="O74507">
    <property type="interactions" value="165"/>
</dbReference>
<dbReference type="PaxDb" id="4896-SPCC594.04c.1"/>
<dbReference type="EnsemblFungi" id="SPCC594.04c.1">
    <property type="protein sequence ID" value="SPCC594.04c.1:pep"/>
    <property type="gene ID" value="SPCC594.04c"/>
</dbReference>
<dbReference type="KEGG" id="spo:2539484"/>
<dbReference type="PomBase" id="SPCC594.04c"/>
<dbReference type="VEuPathDB" id="FungiDB:SPCC594.04c"/>
<dbReference type="eggNOG" id="KOG4650">
    <property type="taxonomic scope" value="Eukaryota"/>
</dbReference>
<dbReference type="HOGENOM" id="CLU_043418_0_1_1"/>
<dbReference type="InParanoid" id="O74507"/>
<dbReference type="OMA" id="WRKGGYQ"/>
<dbReference type="PRO" id="PR:O74507"/>
<dbReference type="Proteomes" id="UP000002485">
    <property type="component" value="Chromosome III"/>
</dbReference>
<dbReference type="GO" id="GO:0005783">
    <property type="term" value="C:endoplasmic reticulum"/>
    <property type="evidence" value="ECO:0007005"/>
    <property type="project" value="PomBase"/>
</dbReference>
<dbReference type="GO" id="GO:0005789">
    <property type="term" value="C:endoplasmic reticulum membrane"/>
    <property type="evidence" value="ECO:0007669"/>
    <property type="project" value="UniProtKB-SubCell"/>
</dbReference>
<dbReference type="GO" id="GO:0016020">
    <property type="term" value="C:membrane"/>
    <property type="evidence" value="ECO:0000318"/>
    <property type="project" value="GO_Central"/>
</dbReference>
<dbReference type="GO" id="GO:0016229">
    <property type="term" value="F:steroid dehydrogenase activity"/>
    <property type="evidence" value="ECO:0000255"/>
    <property type="project" value="PomBase"/>
</dbReference>
<dbReference type="GO" id="GO:0008202">
    <property type="term" value="P:steroid metabolic process"/>
    <property type="evidence" value="ECO:0000305"/>
    <property type="project" value="PomBase"/>
</dbReference>
<dbReference type="Gene3D" id="1.20.120.1630">
    <property type="match status" value="1"/>
</dbReference>
<dbReference type="InterPro" id="IPR010721">
    <property type="entry name" value="UstE-like"/>
</dbReference>
<dbReference type="PANTHER" id="PTHR32251">
    <property type="entry name" value="3-OXO-5-ALPHA-STEROID 4-DEHYDROGENASE"/>
    <property type="match status" value="1"/>
</dbReference>
<dbReference type="PANTHER" id="PTHR32251:SF23">
    <property type="entry name" value="3-OXO-5-ALPHA-STEROID 4-DEHYDROGENASE (DUF1295)"/>
    <property type="match status" value="1"/>
</dbReference>
<dbReference type="Pfam" id="PF06966">
    <property type="entry name" value="DUF1295"/>
    <property type="match status" value="1"/>
</dbReference>
<dbReference type="PROSITE" id="PS50244">
    <property type="entry name" value="S5A_REDUCTASE"/>
    <property type="match status" value="1"/>
</dbReference>